<organism>
    <name type="scientific">Helicobacter pylori (strain J99 / ATCC 700824)</name>
    <name type="common">Campylobacter pylori J99</name>
    <dbReference type="NCBI Taxonomy" id="85963"/>
    <lineage>
        <taxon>Bacteria</taxon>
        <taxon>Pseudomonadati</taxon>
        <taxon>Campylobacterota</taxon>
        <taxon>Epsilonproteobacteria</taxon>
        <taxon>Campylobacterales</taxon>
        <taxon>Helicobacteraceae</taxon>
        <taxon>Helicobacter</taxon>
    </lineage>
</organism>
<name>Y117_HELPJ</name>
<feature type="chain" id="PRO_0000217865" description="UPF0026 protein jhp_0109">
    <location>
        <begin position="1"/>
        <end position="308"/>
    </location>
</feature>
<feature type="domain" description="Radical SAM core" evidence="2">
    <location>
        <begin position="18"/>
        <end position="247"/>
    </location>
</feature>
<feature type="binding site" evidence="1">
    <location>
        <position position="33"/>
    </location>
    <ligand>
        <name>[4Fe-4S] cluster</name>
        <dbReference type="ChEBI" id="CHEBI:49883"/>
        <note>4Fe-4S-S-AdoMet</note>
    </ligand>
</feature>
<feature type="binding site" evidence="1">
    <location>
        <position position="37"/>
    </location>
    <ligand>
        <name>[4Fe-4S] cluster</name>
        <dbReference type="ChEBI" id="CHEBI:49883"/>
        <note>4Fe-4S-S-AdoMet</note>
    </ligand>
</feature>
<feature type="binding site" evidence="1">
    <location>
        <position position="40"/>
    </location>
    <ligand>
        <name>[4Fe-4S] cluster</name>
        <dbReference type="ChEBI" id="CHEBI:49883"/>
        <note>4Fe-4S-S-AdoMet</note>
    </ligand>
</feature>
<protein>
    <recommendedName>
        <fullName>UPF0026 protein jhp_0109</fullName>
    </recommendedName>
</protein>
<keyword id="KW-0004">4Fe-4S</keyword>
<keyword id="KW-0408">Iron</keyword>
<keyword id="KW-0411">Iron-sulfur</keyword>
<keyword id="KW-0479">Metal-binding</keyword>
<keyword id="KW-0949">S-adenosyl-L-methionine</keyword>
<accession>Q9ZMV6</accession>
<dbReference type="EMBL" id="AE001439">
    <property type="protein sequence ID" value="AAD05696.1"/>
    <property type="molecule type" value="Genomic_DNA"/>
</dbReference>
<dbReference type="PIR" id="C71972">
    <property type="entry name" value="C71972"/>
</dbReference>
<dbReference type="RefSeq" id="WP_001040769.1">
    <property type="nucleotide sequence ID" value="NC_000921.1"/>
</dbReference>
<dbReference type="SMR" id="Q9ZMV6"/>
<dbReference type="KEGG" id="hpj:jhp_0109"/>
<dbReference type="PATRIC" id="fig|85963.30.peg.919"/>
<dbReference type="eggNOG" id="COG0731">
    <property type="taxonomic scope" value="Bacteria"/>
</dbReference>
<dbReference type="Proteomes" id="UP000000804">
    <property type="component" value="Chromosome"/>
</dbReference>
<dbReference type="GO" id="GO:0051539">
    <property type="term" value="F:4 iron, 4 sulfur cluster binding"/>
    <property type="evidence" value="ECO:0007669"/>
    <property type="project" value="UniProtKB-KW"/>
</dbReference>
<dbReference type="GO" id="GO:0003824">
    <property type="term" value="F:catalytic activity"/>
    <property type="evidence" value="ECO:0007669"/>
    <property type="project" value="InterPro"/>
</dbReference>
<dbReference type="GO" id="GO:0046872">
    <property type="term" value="F:metal ion binding"/>
    <property type="evidence" value="ECO:0007669"/>
    <property type="project" value="UniProtKB-KW"/>
</dbReference>
<dbReference type="CDD" id="cd01335">
    <property type="entry name" value="Radical_SAM"/>
    <property type="match status" value="1"/>
</dbReference>
<dbReference type="Gene3D" id="3.20.20.70">
    <property type="entry name" value="Aldolase class I"/>
    <property type="match status" value="1"/>
</dbReference>
<dbReference type="InterPro" id="IPR013785">
    <property type="entry name" value="Aldolase_TIM"/>
</dbReference>
<dbReference type="InterPro" id="IPR040084">
    <property type="entry name" value="GTPase_Obg"/>
</dbReference>
<dbReference type="InterPro" id="IPR007197">
    <property type="entry name" value="rSAM"/>
</dbReference>
<dbReference type="PANTHER" id="PTHR43787">
    <property type="entry name" value="FEMO COFACTOR BIOSYNTHESIS PROTEIN NIFB-RELATED"/>
    <property type="match status" value="1"/>
</dbReference>
<dbReference type="PANTHER" id="PTHR43787:SF11">
    <property type="entry name" value="UPF0026 PROTEIN SLR1464"/>
    <property type="match status" value="1"/>
</dbReference>
<dbReference type="Pfam" id="PF04055">
    <property type="entry name" value="Radical_SAM"/>
    <property type="match status" value="1"/>
</dbReference>
<dbReference type="SFLD" id="SFLDS00029">
    <property type="entry name" value="Radical_SAM"/>
    <property type="match status" value="1"/>
</dbReference>
<dbReference type="SFLD" id="SFLDG01083">
    <property type="entry name" value="Uncharacterised_Radical_SAM_Su"/>
    <property type="match status" value="1"/>
</dbReference>
<dbReference type="SUPFAM" id="SSF102114">
    <property type="entry name" value="Radical SAM enzymes"/>
    <property type="match status" value="1"/>
</dbReference>
<dbReference type="PROSITE" id="PS51918">
    <property type="entry name" value="RADICAL_SAM"/>
    <property type="match status" value="1"/>
</dbReference>
<comment type="cofactor">
    <cofactor evidence="3">
        <name>[4Fe-4S] cluster</name>
        <dbReference type="ChEBI" id="CHEBI:49883"/>
    </cofactor>
    <text evidence="3">Binds 1 [4Fe-4S] cluster. The cluster is coordinated with 3 cysteines and an exchangeable S-adenosyl-L-methionine.</text>
</comment>
<comment type="similarity">
    <text evidence="3">Belongs to the UPF0026 family.</text>
</comment>
<proteinExistence type="inferred from homology"/>
<gene>
    <name type="ordered locus">jhp_0109</name>
</gene>
<evidence type="ECO:0000255" key="1"/>
<evidence type="ECO:0000255" key="2">
    <source>
        <dbReference type="PROSITE-ProRule" id="PRU01266"/>
    </source>
</evidence>
<evidence type="ECO:0000305" key="3"/>
<sequence length="308" mass="34341">MAKENLPIVFGPVLSRRFGKSLGVDLSPSKKQCNYNCIYCELGKAKPIERMEEVIKVETLISTIQNALNNLTTPIDVLTITANGEPTLYPHLLELIQSIKPFLKGVKTLILSNGSLFYEPKVQQALKEFDIVKFSLDAIDLKAFERVDKPYSKDINKILEGILSFSQIYQGQLVAEVLLIKGVNDSANNLKLIADFLKKINTARVDLSTIDRPSSFKAPKLSEDELLKCSLFFEGLCVSLPKRSTAQAKKLVSCGIDELLALISRRPLSAEEAPLILDPNAFKHLETLLNHKQITIKKVGSLEFYCAF</sequence>
<reference key="1">
    <citation type="journal article" date="1999" name="Nature">
        <title>Genomic sequence comparison of two unrelated isolates of the human gastric pathogen Helicobacter pylori.</title>
        <authorList>
            <person name="Alm R.A."/>
            <person name="Ling L.-S.L."/>
            <person name="Moir D.T."/>
            <person name="King B.L."/>
            <person name="Brown E.D."/>
            <person name="Doig P.C."/>
            <person name="Smith D.R."/>
            <person name="Noonan B."/>
            <person name="Guild B.C."/>
            <person name="deJonge B.L."/>
            <person name="Carmel G."/>
            <person name="Tummino P.J."/>
            <person name="Caruso A."/>
            <person name="Uria-Nickelsen M."/>
            <person name="Mills D.M."/>
            <person name="Ives C."/>
            <person name="Gibson R."/>
            <person name="Merberg D."/>
            <person name="Mills S.D."/>
            <person name="Jiang Q."/>
            <person name="Taylor D.E."/>
            <person name="Vovis G.F."/>
            <person name="Trust T.J."/>
        </authorList>
    </citation>
    <scope>NUCLEOTIDE SEQUENCE [LARGE SCALE GENOMIC DNA]</scope>
    <source>
        <strain>J99 / ATCC 700824</strain>
    </source>
</reference>